<organism>
    <name type="scientific">Pyrococcus furiosus (strain ATCC 43587 / DSM 3638 / JCM 8422 / Vc1)</name>
    <dbReference type="NCBI Taxonomy" id="186497"/>
    <lineage>
        <taxon>Archaea</taxon>
        <taxon>Methanobacteriati</taxon>
        <taxon>Methanobacteriota</taxon>
        <taxon>Thermococci</taxon>
        <taxon>Thermococcales</taxon>
        <taxon>Thermococcaceae</taxon>
        <taxon>Pyrococcus</taxon>
    </lineage>
</organism>
<gene>
    <name evidence="1" type="primary">cpgS</name>
    <name type="ordered locus">PF0079</name>
</gene>
<evidence type="ECO:0000255" key="1">
    <source>
        <dbReference type="HAMAP-Rule" id="MF_01908"/>
    </source>
</evidence>
<feature type="chain" id="PRO_0000313695" description="Cyclic 2,3-diphosphoglycerate synthetase">
    <location>
        <begin position="1"/>
        <end position="431"/>
    </location>
</feature>
<comment type="function">
    <text evidence="1">Catalyzes the formation of cyclic 2,3-diphosphoglycerate (cDPG) by formation of an intramolecular phosphoanhydride bond at the expense of ATP.</text>
</comment>
<comment type="catalytic activity">
    <reaction evidence="1">
        <text>(2R)-2,3-bisphosphoglycerate + ATP + H(+) = cyclic (2R)-2,3-bisphosphoglycerate + ADP + phosphate</text>
        <dbReference type="Rhea" id="RHEA:42412"/>
        <dbReference type="ChEBI" id="CHEBI:15378"/>
        <dbReference type="ChEBI" id="CHEBI:30616"/>
        <dbReference type="ChEBI" id="CHEBI:43474"/>
        <dbReference type="ChEBI" id="CHEBI:58248"/>
        <dbReference type="ChEBI" id="CHEBI:79081"/>
        <dbReference type="ChEBI" id="CHEBI:456216"/>
        <dbReference type="EC" id="6.5.1.9"/>
    </reaction>
</comment>
<comment type="subcellular location">
    <subcellularLocation>
        <location evidence="1">Cytoplasm</location>
    </subcellularLocation>
</comment>
<comment type="similarity">
    <text evidence="1">Belongs to the cyclic 2,3-diphosphoglycerate synthetase family.</text>
</comment>
<dbReference type="EC" id="6.5.1.9" evidence="1"/>
<dbReference type="EMBL" id="AE009950">
    <property type="protein sequence ID" value="AAL80203.1"/>
    <property type="molecule type" value="Genomic_DNA"/>
</dbReference>
<dbReference type="RefSeq" id="WP_011011191.1">
    <property type="nucleotide sequence ID" value="NC_003413.1"/>
</dbReference>
<dbReference type="SMR" id="Q8U4K6"/>
<dbReference type="STRING" id="186497.PF0079"/>
<dbReference type="PaxDb" id="186497-PF0079"/>
<dbReference type="GeneID" id="1467908"/>
<dbReference type="KEGG" id="pfu:PF0079"/>
<dbReference type="PATRIC" id="fig|186497.12.peg.83"/>
<dbReference type="eggNOG" id="arCOG01230">
    <property type="taxonomic scope" value="Archaea"/>
</dbReference>
<dbReference type="HOGENOM" id="CLU_638764_0_0_2"/>
<dbReference type="OrthoDB" id="85545at2157"/>
<dbReference type="PhylomeDB" id="Q8U4K6"/>
<dbReference type="Proteomes" id="UP000001013">
    <property type="component" value="Chromosome"/>
</dbReference>
<dbReference type="GO" id="GO:0005737">
    <property type="term" value="C:cytoplasm"/>
    <property type="evidence" value="ECO:0007669"/>
    <property type="project" value="UniProtKB-SubCell"/>
</dbReference>
<dbReference type="GO" id="GO:0005524">
    <property type="term" value="F:ATP binding"/>
    <property type="evidence" value="ECO:0007669"/>
    <property type="project" value="UniProtKB-KW"/>
</dbReference>
<dbReference type="GO" id="GO:0036356">
    <property type="term" value="F:cyclic 2,3-diphosphoglycerate synthetase activity"/>
    <property type="evidence" value="ECO:0007669"/>
    <property type="project" value="InterPro"/>
</dbReference>
<dbReference type="GO" id="GO:0016874">
    <property type="term" value="F:ligase activity"/>
    <property type="evidence" value="ECO:0007669"/>
    <property type="project" value="UniProtKB-UniRule"/>
</dbReference>
<dbReference type="GO" id="GO:0006094">
    <property type="term" value="P:gluconeogenesis"/>
    <property type="evidence" value="ECO:0007669"/>
    <property type="project" value="InterPro"/>
</dbReference>
<dbReference type="Gene3D" id="3.40.50.300">
    <property type="entry name" value="P-loop containing nucleotide triphosphate hydrolases"/>
    <property type="match status" value="1"/>
</dbReference>
<dbReference type="HAMAP" id="MF_01908">
    <property type="entry name" value="Cyc_PG_syn"/>
    <property type="match status" value="1"/>
</dbReference>
<dbReference type="InterPro" id="IPR016557">
    <property type="entry name" value="Cyc_diphosphoglycerate_synth"/>
</dbReference>
<dbReference type="InterPro" id="IPR027417">
    <property type="entry name" value="P-loop_NTPase"/>
</dbReference>
<dbReference type="PIRSF" id="PIRSF009445">
    <property type="entry name" value="Cyc_PG_syn"/>
    <property type="match status" value="1"/>
</dbReference>
<dbReference type="SUPFAM" id="SSF52540">
    <property type="entry name" value="P-loop containing nucleoside triphosphate hydrolases"/>
    <property type="match status" value="1"/>
</dbReference>
<reference key="1">
    <citation type="journal article" date="1999" name="Genetics">
        <title>Divergence of the hyperthermophilic archaea Pyrococcus furiosus and P. horikoshii inferred from complete genomic sequences.</title>
        <authorList>
            <person name="Maeder D.L."/>
            <person name="Weiss R.B."/>
            <person name="Dunn D.M."/>
            <person name="Cherry J.L."/>
            <person name="Gonzalez J.M."/>
            <person name="DiRuggiero J."/>
            <person name="Robb F.T."/>
        </authorList>
    </citation>
    <scope>NUCLEOTIDE SEQUENCE [LARGE SCALE GENOMIC DNA]</scope>
    <source>
        <strain>ATCC 43587 / DSM 3638 / JCM 8422 / Vc1</strain>
    </source>
</reference>
<proteinExistence type="inferred from homology"/>
<accession>Q8U4K6</accession>
<name>CPGS_PYRFU</name>
<sequence>MKLALIDGEHYPDVNRWAIEKIKPCCAVFVGGTEKIGSIRDIEKALNIKVYHSPNIFEALSKAISENNITEVIDLSDEPVLTPNLRFRIASYLLKLGITYKGADFEFRAKEWKKIDIPSISIIGTGKRVGKTAIGGFVGRTLKELYKVVIVTMGRGGPEKPEVIRGDLMEITPEFLLKVSEEGKHAASDHFEDALTAGVITVGCRRCGGGLAGFSFFDIIDEGIEIAKSLNPDIIVFEGSGPTFPNVLADGFITITSAIHGTEKIEQYFGPLRIGLADIVVVTMADSVSEEKLKRITQAIREINPEADIHLTRFVPRLIGEVDGKAIIATTNPQSAKKFSEELEKMGIEVVYYTGNLAKRNILKDELAKVNYDDTAIVELKAGAVDVVIRHAFSRGKRVVFLDNEPKNIDGKDLKEAVINLARRIVNDKGN</sequence>
<keyword id="KW-0067">ATP-binding</keyword>
<keyword id="KW-0963">Cytoplasm</keyword>
<keyword id="KW-0436">Ligase</keyword>
<keyword id="KW-0547">Nucleotide-binding</keyword>
<keyword id="KW-1185">Reference proteome</keyword>
<protein>
    <recommendedName>
        <fullName evidence="1">Cyclic 2,3-diphosphoglycerate synthetase</fullName>
        <shortName evidence="1">cDPGS</shortName>
        <ecNumber evidence="1">6.5.1.9</ecNumber>
    </recommendedName>
</protein>